<evidence type="ECO:0000255" key="1">
    <source>
        <dbReference type="HAMAP-Rule" id="MF_00281"/>
    </source>
</evidence>
<accession>Q1J1V8</accession>
<protein>
    <recommendedName>
        <fullName evidence="1">Phenylalanine--tRNA ligase alpha subunit</fullName>
        <ecNumber evidence="1">6.1.1.20</ecNumber>
    </recommendedName>
    <alternativeName>
        <fullName evidence="1">Phenylalanyl-tRNA synthetase alpha subunit</fullName>
        <shortName evidence="1">PheRS</shortName>
    </alternativeName>
</protein>
<gene>
    <name evidence="1" type="primary">pheS</name>
    <name type="ordered locus">Dgeo_0223</name>
</gene>
<name>SYFA_DEIGD</name>
<proteinExistence type="inferred from homology"/>
<reference key="1">
    <citation type="submission" date="2006-04" db="EMBL/GenBank/DDBJ databases">
        <title>Complete sequence of chromosome of Deinococcus geothermalis DSM 11300.</title>
        <authorList>
            <person name="Copeland A."/>
            <person name="Lucas S."/>
            <person name="Lapidus A."/>
            <person name="Barry K."/>
            <person name="Detter J.C."/>
            <person name="Glavina del Rio T."/>
            <person name="Hammon N."/>
            <person name="Israni S."/>
            <person name="Dalin E."/>
            <person name="Tice H."/>
            <person name="Pitluck S."/>
            <person name="Brettin T."/>
            <person name="Bruce D."/>
            <person name="Han C."/>
            <person name="Tapia R."/>
            <person name="Saunders E."/>
            <person name="Gilna P."/>
            <person name="Schmutz J."/>
            <person name="Larimer F."/>
            <person name="Land M."/>
            <person name="Hauser L."/>
            <person name="Kyrpides N."/>
            <person name="Kim E."/>
            <person name="Daly M.J."/>
            <person name="Fredrickson J.K."/>
            <person name="Makarova K.S."/>
            <person name="Gaidamakova E.K."/>
            <person name="Zhai M."/>
            <person name="Richardson P."/>
        </authorList>
    </citation>
    <scope>NUCLEOTIDE SEQUENCE [LARGE SCALE GENOMIC DNA]</scope>
    <source>
        <strain>DSM 11300 / CIP 105573 / AG-3a</strain>
    </source>
</reference>
<sequence length="339" mass="37892">MREEALQAIQEAPDLPALQAVKTRYLGKSGLVTRELGALGKLPPEERKRRGAELNALRQAIDAALTEREAVLKRAALDARLASEAIDVTLPGLSLPAGGLHPISRVYDDLIRIFERMGYAVVEGPEVEDEHHNFEALNVPWYHPARDLQDTFWLEDGRLLRTHTSPMQVRYMVDHEPPLKVVVRGKVYRYEATDATHESMFHQLEGLVVGDGISMADLKGTVAELARGLYGPSAKVRFQPSYYPFVEPGADFAVWWDNPRGESKWLELGGCGMVHPNVFRAVDDLREAAGKPRVYEGKTGFAFGLGPERIAMLKYGIPDIRYFYANDPRVIGQFRGELG</sequence>
<feature type="chain" id="PRO_1000006822" description="Phenylalanine--tRNA ligase alpha subunit">
    <location>
        <begin position="1"/>
        <end position="339"/>
    </location>
</feature>
<feature type="binding site" evidence="1">
    <location>
        <position position="247"/>
    </location>
    <ligand>
        <name>Mg(2+)</name>
        <dbReference type="ChEBI" id="CHEBI:18420"/>
        <note>shared with beta subunit</note>
    </ligand>
</feature>
<keyword id="KW-0030">Aminoacyl-tRNA synthetase</keyword>
<keyword id="KW-0067">ATP-binding</keyword>
<keyword id="KW-0963">Cytoplasm</keyword>
<keyword id="KW-0436">Ligase</keyword>
<keyword id="KW-0460">Magnesium</keyword>
<keyword id="KW-0479">Metal-binding</keyword>
<keyword id="KW-0547">Nucleotide-binding</keyword>
<keyword id="KW-0648">Protein biosynthesis</keyword>
<comment type="catalytic activity">
    <reaction evidence="1">
        <text>tRNA(Phe) + L-phenylalanine + ATP = L-phenylalanyl-tRNA(Phe) + AMP + diphosphate + H(+)</text>
        <dbReference type="Rhea" id="RHEA:19413"/>
        <dbReference type="Rhea" id="RHEA-COMP:9668"/>
        <dbReference type="Rhea" id="RHEA-COMP:9699"/>
        <dbReference type="ChEBI" id="CHEBI:15378"/>
        <dbReference type="ChEBI" id="CHEBI:30616"/>
        <dbReference type="ChEBI" id="CHEBI:33019"/>
        <dbReference type="ChEBI" id="CHEBI:58095"/>
        <dbReference type="ChEBI" id="CHEBI:78442"/>
        <dbReference type="ChEBI" id="CHEBI:78531"/>
        <dbReference type="ChEBI" id="CHEBI:456215"/>
        <dbReference type="EC" id="6.1.1.20"/>
    </reaction>
</comment>
<comment type="cofactor">
    <cofactor evidence="1">
        <name>Mg(2+)</name>
        <dbReference type="ChEBI" id="CHEBI:18420"/>
    </cofactor>
    <text evidence="1">Binds 2 magnesium ions per tetramer.</text>
</comment>
<comment type="subunit">
    <text evidence="1">Tetramer of two alpha and two beta subunits.</text>
</comment>
<comment type="subcellular location">
    <subcellularLocation>
        <location evidence="1">Cytoplasm</location>
    </subcellularLocation>
</comment>
<comment type="similarity">
    <text evidence="1">Belongs to the class-II aminoacyl-tRNA synthetase family. Phe-tRNA synthetase alpha subunit type 1 subfamily.</text>
</comment>
<organism>
    <name type="scientific">Deinococcus geothermalis (strain DSM 11300 / CIP 105573 / AG-3a)</name>
    <dbReference type="NCBI Taxonomy" id="319795"/>
    <lineage>
        <taxon>Bacteria</taxon>
        <taxon>Thermotogati</taxon>
        <taxon>Deinococcota</taxon>
        <taxon>Deinococci</taxon>
        <taxon>Deinococcales</taxon>
        <taxon>Deinococcaceae</taxon>
        <taxon>Deinococcus</taxon>
    </lineage>
</organism>
<dbReference type="EC" id="6.1.1.20" evidence="1"/>
<dbReference type="EMBL" id="CP000359">
    <property type="protein sequence ID" value="ABF44526.1"/>
    <property type="molecule type" value="Genomic_DNA"/>
</dbReference>
<dbReference type="RefSeq" id="WP_011529373.1">
    <property type="nucleotide sequence ID" value="NC_008025.1"/>
</dbReference>
<dbReference type="SMR" id="Q1J1V8"/>
<dbReference type="STRING" id="319795.Dgeo_0223"/>
<dbReference type="KEGG" id="dge:Dgeo_0223"/>
<dbReference type="eggNOG" id="COG0016">
    <property type="taxonomic scope" value="Bacteria"/>
</dbReference>
<dbReference type="HOGENOM" id="CLU_025086_0_1_0"/>
<dbReference type="Proteomes" id="UP000002431">
    <property type="component" value="Chromosome"/>
</dbReference>
<dbReference type="GO" id="GO:0005737">
    <property type="term" value="C:cytoplasm"/>
    <property type="evidence" value="ECO:0007669"/>
    <property type="project" value="UniProtKB-SubCell"/>
</dbReference>
<dbReference type="GO" id="GO:0005524">
    <property type="term" value="F:ATP binding"/>
    <property type="evidence" value="ECO:0007669"/>
    <property type="project" value="UniProtKB-UniRule"/>
</dbReference>
<dbReference type="GO" id="GO:0000287">
    <property type="term" value="F:magnesium ion binding"/>
    <property type="evidence" value="ECO:0007669"/>
    <property type="project" value="UniProtKB-UniRule"/>
</dbReference>
<dbReference type="GO" id="GO:0004826">
    <property type="term" value="F:phenylalanine-tRNA ligase activity"/>
    <property type="evidence" value="ECO:0007669"/>
    <property type="project" value="UniProtKB-UniRule"/>
</dbReference>
<dbReference type="GO" id="GO:0000049">
    <property type="term" value="F:tRNA binding"/>
    <property type="evidence" value="ECO:0007669"/>
    <property type="project" value="InterPro"/>
</dbReference>
<dbReference type="GO" id="GO:0006432">
    <property type="term" value="P:phenylalanyl-tRNA aminoacylation"/>
    <property type="evidence" value="ECO:0007669"/>
    <property type="project" value="UniProtKB-UniRule"/>
</dbReference>
<dbReference type="CDD" id="cd00496">
    <property type="entry name" value="PheRS_alpha_core"/>
    <property type="match status" value="1"/>
</dbReference>
<dbReference type="Gene3D" id="3.30.930.10">
    <property type="entry name" value="Bira Bifunctional Protein, Domain 2"/>
    <property type="match status" value="1"/>
</dbReference>
<dbReference type="HAMAP" id="MF_00281">
    <property type="entry name" value="Phe_tRNA_synth_alpha1"/>
    <property type="match status" value="1"/>
</dbReference>
<dbReference type="InterPro" id="IPR006195">
    <property type="entry name" value="aa-tRNA-synth_II"/>
</dbReference>
<dbReference type="InterPro" id="IPR045864">
    <property type="entry name" value="aa-tRNA-synth_II/BPL/LPL"/>
</dbReference>
<dbReference type="InterPro" id="IPR004529">
    <property type="entry name" value="Phe-tRNA-synth_IIc_asu"/>
</dbReference>
<dbReference type="InterPro" id="IPR004188">
    <property type="entry name" value="Phe-tRNA_ligase_II_N"/>
</dbReference>
<dbReference type="InterPro" id="IPR022911">
    <property type="entry name" value="Phe_tRNA_ligase_alpha1_bac"/>
</dbReference>
<dbReference type="InterPro" id="IPR002319">
    <property type="entry name" value="Phenylalanyl-tRNA_Synthase"/>
</dbReference>
<dbReference type="InterPro" id="IPR010978">
    <property type="entry name" value="tRNA-bd_arm"/>
</dbReference>
<dbReference type="NCBIfam" id="TIGR00468">
    <property type="entry name" value="pheS"/>
    <property type="match status" value="1"/>
</dbReference>
<dbReference type="PANTHER" id="PTHR11538:SF41">
    <property type="entry name" value="PHENYLALANINE--TRNA LIGASE, MITOCHONDRIAL"/>
    <property type="match status" value="1"/>
</dbReference>
<dbReference type="PANTHER" id="PTHR11538">
    <property type="entry name" value="PHENYLALANYL-TRNA SYNTHETASE"/>
    <property type="match status" value="1"/>
</dbReference>
<dbReference type="Pfam" id="PF02912">
    <property type="entry name" value="Phe_tRNA-synt_N"/>
    <property type="match status" value="1"/>
</dbReference>
<dbReference type="Pfam" id="PF01409">
    <property type="entry name" value="tRNA-synt_2d"/>
    <property type="match status" value="1"/>
</dbReference>
<dbReference type="SUPFAM" id="SSF55681">
    <property type="entry name" value="Class II aaRS and biotin synthetases"/>
    <property type="match status" value="1"/>
</dbReference>
<dbReference type="SUPFAM" id="SSF46589">
    <property type="entry name" value="tRNA-binding arm"/>
    <property type="match status" value="1"/>
</dbReference>
<dbReference type="PROSITE" id="PS50862">
    <property type="entry name" value="AA_TRNA_LIGASE_II"/>
    <property type="match status" value="1"/>
</dbReference>